<gene>
    <name evidence="3" type="primary">mmaE</name>
    <name evidence="5" type="ordered locus">MMAR_0260</name>
</gene>
<name>INLPE_MYCMM</name>
<proteinExistence type="evidence at protein level"/>
<reference key="1">
    <citation type="journal article" date="2008" name="Genome Res.">
        <title>Insights from the complete genome sequence of Mycobacterium marinum on the evolution of Mycobacterium tuberculosis.</title>
        <authorList>
            <person name="Stinear T.P."/>
            <person name="Seemann T."/>
            <person name="Harrison P.F."/>
            <person name="Jenkin G.A."/>
            <person name="Davies J.K."/>
            <person name="Johnson P.D."/>
            <person name="Abdellah Z."/>
            <person name="Arrowsmith C."/>
            <person name="Chillingworth T."/>
            <person name="Churcher C."/>
            <person name="Clarke K."/>
            <person name="Cronin A."/>
            <person name="Davis P."/>
            <person name="Goodhead I."/>
            <person name="Holroyd N."/>
            <person name="Jagels K."/>
            <person name="Lord A."/>
            <person name="Moule S."/>
            <person name="Mungall K."/>
            <person name="Norbertczak H."/>
            <person name="Quail M.A."/>
            <person name="Rabbinowitsch E."/>
            <person name="Walker D."/>
            <person name="White B."/>
            <person name="Whitehead S."/>
            <person name="Small P.L."/>
            <person name="Brosch R."/>
            <person name="Ramakrishnan L."/>
            <person name="Fischbach M.A."/>
            <person name="Parkhill J."/>
            <person name="Cole S.T."/>
        </authorList>
    </citation>
    <scope>NUCLEOTIDE SEQUENCE [LARGE SCALE GENOMIC DNA]</scope>
    <source>
        <strain>ATCC BAA-535 / M</strain>
    </source>
</reference>
<reference key="2">
    <citation type="journal article" date="2017" name="Proc. Natl. Acad. Sci. U.S.A.">
        <title>Biosynthesis of isonitrile lipopeptides by conserved nonribosomal peptide synthetase gene clusters in Actinobacteria.</title>
        <authorList>
            <person name="Harris N.C."/>
            <person name="Sato M."/>
            <person name="Herman N.A."/>
            <person name="Twigg F."/>
            <person name="Cai W."/>
            <person name="Liu J."/>
            <person name="Zhu X."/>
            <person name="Downey J."/>
            <person name="Khalaf R."/>
            <person name="Martin J."/>
            <person name="Koshino H."/>
            <person name="Zhang W."/>
        </authorList>
    </citation>
    <scope>FUNCTION</scope>
    <scope>DISRUPTION PHENOTYPE</scope>
    <source>
        <strain>ATCC BAA-535 / M</strain>
    </source>
</reference>
<keyword id="KW-0002">3D-structure</keyword>
<keyword id="KW-0223">Dioxygenase</keyword>
<keyword id="KW-0408">Iron</keyword>
<keyword id="KW-0479">Metal-binding</keyword>
<keyword id="KW-0560">Oxidoreductase</keyword>
<keyword id="KW-1185">Reference proteome</keyword>
<sequence length="289" mass="32318">MTLNVKGEGLGAQITGVDPKNLDDITTDEIRDIVYANKLVILKDVNPSPEEFLKLGKIVGQIVPYYEPMYHHEDHPEIFVSSTEEGQGVPKTGAFWHIDYMFMPEPFAFSMVLPLAVPGHDRGTYFIDLAKVWQSLPAAQQAPARGTLSTHDPRRHIKIRPSDVYRPIGEVWDEISRATPPIKWPTVIRHPKTGEEILYICATGTTKIEDKDGNLVDPAVLAELLAATGQLDPEYNSPFIHTQHYEVGDIILWDNRVLMHRAKHGTASGTLTTYRLTMLDGLETPGYPA</sequence>
<accession>B2HKM3</accession>
<protein>
    <recommendedName>
        <fullName evidence="4">(3R)-3-[(carboxymethyl)amino]fatty acid oxygenase/decarboxylase</fullName>
        <ecNumber evidence="1">1.14.11.78</ecNumber>
    </recommendedName>
</protein>
<evidence type="ECO:0000250" key="1">
    <source>
        <dbReference type="UniProtKB" id="A0A3B6UEU3"/>
    </source>
</evidence>
<evidence type="ECO:0000269" key="2">
    <source>
    </source>
</evidence>
<evidence type="ECO:0000303" key="3">
    <source>
    </source>
</evidence>
<evidence type="ECO:0000305" key="4"/>
<evidence type="ECO:0000312" key="5">
    <source>
        <dbReference type="EMBL" id="ACC38728.1"/>
    </source>
</evidence>
<evidence type="ECO:0007829" key="6">
    <source>
        <dbReference type="PDB" id="8KIF"/>
    </source>
</evidence>
<comment type="function">
    <text evidence="1 2">Involved in the biosynthesis of a unique class of isonitrile lipopeptides (INLPs) that seem to play a role in metal acquisition in M.marinum (PubMed:28634299). Catalyzes the conversion of (3R)-3-[(carboxymethyl)amino]fatty acids to (3R)-3-isocyanyl-fatty acids through an oxidative decarboxylation mechanism, thereby generating the isonitrile group of INLPs (By similarity).</text>
</comment>
<comment type="catalytic activity">
    <reaction evidence="1">
        <text>a (3R)-3-[(carboxymethyl)amino]fatty acid + 2 2-oxoglutarate + 2 O2 = a (3R)-3-isocyanyl-fatty acid + 2 succinate + 3 CO2 + 2 H2O</text>
        <dbReference type="Rhea" id="RHEA:74931"/>
        <dbReference type="ChEBI" id="CHEBI:15377"/>
        <dbReference type="ChEBI" id="CHEBI:15379"/>
        <dbReference type="ChEBI" id="CHEBI:16526"/>
        <dbReference type="ChEBI" id="CHEBI:16810"/>
        <dbReference type="ChEBI" id="CHEBI:30031"/>
        <dbReference type="ChEBI" id="CHEBI:193080"/>
        <dbReference type="ChEBI" id="CHEBI:193084"/>
        <dbReference type="EC" id="1.14.11.78"/>
    </reaction>
    <physiologicalReaction direction="left-to-right" evidence="1">
        <dbReference type="Rhea" id="RHEA:74932"/>
    </physiologicalReaction>
</comment>
<comment type="catalytic activity">
    <reaction evidence="1">
        <text>a (3R)-3-[(carboxymethyl)amino]fatty acid + 2-oxoglutarate + O2 = a (3R)-3-{[carboxy(hydroxy)methyl]amino}fatty acid + succinate + CO2</text>
        <dbReference type="Rhea" id="RHEA:74939"/>
        <dbReference type="ChEBI" id="CHEBI:15379"/>
        <dbReference type="ChEBI" id="CHEBI:16526"/>
        <dbReference type="ChEBI" id="CHEBI:16810"/>
        <dbReference type="ChEBI" id="CHEBI:30031"/>
        <dbReference type="ChEBI" id="CHEBI:193080"/>
        <dbReference type="ChEBI" id="CHEBI:193082"/>
    </reaction>
    <physiologicalReaction direction="left-to-right" evidence="1">
        <dbReference type="Rhea" id="RHEA:74940"/>
    </physiologicalReaction>
</comment>
<comment type="catalytic activity">
    <reaction evidence="1">
        <text>a (3R)-3-{[carboxy(hydroxy)methyl]amino}fatty acid + 2-oxoglutarate + O2 = a (3R)-3-isocyanyl-fatty acid + succinate + 2 CO2 + 2 H2O</text>
        <dbReference type="Rhea" id="RHEA:74943"/>
        <dbReference type="ChEBI" id="CHEBI:15377"/>
        <dbReference type="ChEBI" id="CHEBI:15379"/>
        <dbReference type="ChEBI" id="CHEBI:16526"/>
        <dbReference type="ChEBI" id="CHEBI:16810"/>
        <dbReference type="ChEBI" id="CHEBI:30031"/>
        <dbReference type="ChEBI" id="CHEBI:193082"/>
        <dbReference type="ChEBI" id="CHEBI:193084"/>
    </reaction>
    <physiologicalReaction direction="left-to-right" evidence="1">
        <dbReference type="Rhea" id="RHEA:74944"/>
    </physiologicalReaction>
</comment>
<comment type="cofactor">
    <cofactor evidence="1">
        <name>Fe(2+)</name>
        <dbReference type="ChEBI" id="CHEBI:29033"/>
    </cofactor>
</comment>
<comment type="disruption phenotype">
    <text evidence="2">Deletion of the gene cluster mmaABCDE causes a significant decrease in the intracellular accumulation of zinc in Sauton's medium where metal concentrations are relatively low.</text>
</comment>
<comment type="miscellaneous">
    <text evidence="1">Isonitrile formation goes through two consecutive, but distinctive, 2-oxoglutarate-dpendent reactions catalyzed by this enzyme. In the first reaction, an Fe(IV)-oxo species is utilized to generate a (3R)-3-{[carboxy(hydroxy)methyl]amino}fatty acid. Then, its conversion into a (3R)-3-isocyanyl-fatty acid likely proceeds by decarboxylation-assisted desaturation.</text>
</comment>
<comment type="similarity">
    <text evidence="4">Belongs to the TfdA dioxygenase family.</text>
</comment>
<dbReference type="EC" id="1.14.11.78" evidence="1"/>
<dbReference type="EMBL" id="CP000854">
    <property type="protein sequence ID" value="ACC38728.1"/>
    <property type="molecule type" value="Genomic_DNA"/>
</dbReference>
<dbReference type="RefSeq" id="WP_012392254.1">
    <property type="nucleotide sequence ID" value="NC_010612.1"/>
</dbReference>
<dbReference type="PDB" id="8KIF">
    <property type="method" value="X-ray"/>
    <property type="resolution" value="2.13 A"/>
    <property type="chains" value="A/B/C/D=1-289"/>
</dbReference>
<dbReference type="PDBsum" id="8KIF"/>
<dbReference type="SMR" id="B2HKM3"/>
<dbReference type="STRING" id="216594.MMAR_0260"/>
<dbReference type="KEGG" id="mmi:MMAR_0260"/>
<dbReference type="eggNOG" id="COG2175">
    <property type="taxonomic scope" value="Bacteria"/>
</dbReference>
<dbReference type="HOGENOM" id="CLU_036005_2_0_11"/>
<dbReference type="OrthoDB" id="581608at2"/>
<dbReference type="Proteomes" id="UP000001190">
    <property type="component" value="Chromosome"/>
</dbReference>
<dbReference type="GO" id="GO:0051213">
    <property type="term" value="F:dioxygenase activity"/>
    <property type="evidence" value="ECO:0007669"/>
    <property type="project" value="UniProtKB-KW"/>
</dbReference>
<dbReference type="GO" id="GO:0046872">
    <property type="term" value="F:metal ion binding"/>
    <property type="evidence" value="ECO:0007669"/>
    <property type="project" value="UniProtKB-KW"/>
</dbReference>
<dbReference type="Gene3D" id="3.60.130.10">
    <property type="entry name" value="Clavaminate synthase-like"/>
    <property type="match status" value="1"/>
</dbReference>
<dbReference type="InterPro" id="IPR042098">
    <property type="entry name" value="TauD-like_sf"/>
</dbReference>
<dbReference type="InterPro" id="IPR003819">
    <property type="entry name" value="TauD/TfdA-like"/>
</dbReference>
<dbReference type="InterPro" id="IPR051178">
    <property type="entry name" value="TfdA_dioxygenase"/>
</dbReference>
<dbReference type="PANTHER" id="PTHR43779:SF3">
    <property type="entry name" value="(3R)-3-[(CARBOXYMETHYL)AMINO]FATTY ACID OXYGENASE_DECARBOXYLASE"/>
    <property type="match status" value="1"/>
</dbReference>
<dbReference type="PANTHER" id="PTHR43779">
    <property type="entry name" value="DIOXYGENASE RV0097-RELATED"/>
    <property type="match status" value="1"/>
</dbReference>
<dbReference type="Pfam" id="PF02668">
    <property type="entry name" value="TauD"/>
    <property type="match status" value="1"/>
</dbReference>
<dbReference type="SUPFAM" id="SSF51197">
    <property type="entry name" value="Clavaminate synthase-like"/>
    <property type="match status" value="1"/>
</dbReference>
<organism>
    <name type="scientific">Mycobacterium marinum (strain ATCC BAA-535 / M)</name>
    <dbReference type="NCBI Taxonomy" id="216594"/>
    <lineage>
        <taxon>Bacteria</taxon>
        <taxon>Bacillati</taxon>
        <taxon>Actinomycetota</taxon>
        <taxon>Actinomycetes</taxon>
        <taxon>Mycobacteriales</taxon>
        <taxon>Mycobacteriaceae</taxon>
        <taxon>Mycobacterium</taxon>
        <taxon>Mycobacterium ulcerans group</taxon>
    </lineage>
</organism>
<feature type="chain" id="PRO_0000458130" description="(3R)-3-[(carboxymethyl)amino]fatty acid oxygenase/decarboxylase">
    <location>
        <begin position="1"/>
        <end position="289"/>
    </location>
</feature>
<feature type="binding site" evidence="1">
    <location>
        <position position="65"/>
    </location>
    <ligand>
        <name>a (3R)-3-[(carboxymethyl)amino]fatty acid</name>
        <dbReference type="ChEBI" id="CHEBI:193080"/>
    </ligand>
</feature>
<feature type="binding site" evidence="1">
    <location>
        <position position="70"/>
    </location>
    <ligand>
        <name>a (3R)-3-[(carboxymethyl)amino]fatty acid</name>
        <dbReference type="ChEBI" id="CHEBI:193080"/>
    </ligand>
</feature>
<feature type="binding site" evidence="1">
    <location>
        <position position="93"/>
    </location>
    <ligand>
        <name>a (3R)-3-[(carboxymethyl)amino]fatty acid</name>
        <dbReference type="ChEBI" id="CHEBI:193080"/>
    </ligand>
</feature>
<feature type="binding site" evidence="1">
    <location>
        <position position="97"/>
    </location>
    <ligand>
        <name>Fe(2+)</name>
        <dbReference type="ChEBI" id="CHEBI:29033"/>
    </ligand>
</feature>
<feature type="binding site" evidence="1">
    <location>
        <position position="99"/>
    </location>
    <ligand>
        <name>Fe(2+)</name>
        <dbReference type="ChEBI" id="CHEBI:29033"/>
    </ligand>
</feature>
<feature type="binding site" evidence="1">
    <location>
        <position position="100"/>
    </location>
    <ligand>
        <name>a (3R)-3-[(carboxymethyl)amino]fatty acid</name>
        <dbReference type="ChEBI" id="CHEBI:193080"/>
    </ligand>
</feature>
<feature type="binding site" evidence="1">
    <location>
        <position position="158"/>
    </location>
    <ligand>
        <name>a (3R)-3-[(carboxymethyl)amino]fatty acid</name>
        <dbReference type="ChEBI" id="CHEBI:193080"/>
    </ligand>
</feature>
<feature type="binding site" evidence="1">
    <location>
        <position position="260"/>
    </location>
    <ligand>
        <name>Fe(2+)</name>
        <dbReference type="ChEBI" id="CHEBI:29033"/>
    </ligand>
</feature>
<feature type="binding site" evidence="1">
    <location>
        <position position="264"/>
    </location>
    <ligand>
        <name>2-oxoglutarate</name>
        <dbReference type="ChEBI" id="CHEBI:16810"/>
    </ligand>
</feature>
<feature type="binding site" evidence="1">
    <location>
        <position position="275"/>
    </location>
    <ligand>
        <name>a (3R)-3-[(carboxymethyl)amino]fatty acid</name>
        <dbReference type="ChEBI" id="CHEBI:193080"/>
    </ligand>
</feature>
<feature type="helix" evidence="6">
    <location>
        <begin position="22"/>
        <end position="24"/>
    </location>
</feature>
<feature type="helix" evidence="6">
    <location>
        <begin position="27"/>
        <end position="37"/>
    </location>
</feature>
<feature type="strand" evidence="6">
    <location>
        <begin position="38"/>
        <end position="42"/>
    </location>
</feature>
<feature type="helix" evidence="6">
    <location>
        <begin position="49"/>
        <end position="59"/>
    </location>
</feature>
<feature type="strand" evidence="6">
    <location>
        <begin position="60"/>
        <end position="62"/>
    </location>
</feature>
<feature type="helix" evidence="6">
    <location>
        <begin position="68"/>
        <end position="70"/>
    </location>
</feature>
<feature type="strand" evidence="6">
    <location>
        <begin position="78"/>
        <end position="84"/>
    </location>
</feature>
<feature type="strand" evidence="6">
    <location>
        <begin position="87"/>
        <end position="91"/>
    </location>
</feature>
<feature type="turn" evidence="6">
    <location>
        <begin position="99"/>
        <end position="102"/>
    </location>
</feature>
<feature type="strand" evidence="6">
    <location>
        <begin position="103"/>
        <end position="105"/>
    </location>
</feature>
<feature type="strand" evidence="6">
    <location>
        <begin position="108"/>
        <end position="116"/>
    </location>
</feature>
<feature type="strand" evidence="6">
    <location>
        <begin position="123"/>
        <end position="128"/>
    </location>
</feature>
<feature type="helix" evidence="6">
    <location>
        <begin position="129"/>
        <end position="134"/>
    </location>
</feature>
<feature type="helix" evidence="6">
    <location>
        <begin position="138"/>
        <end position="141"/>
    </location>
</feature>
<feature type="helix" evidence="6">
    <location>
        <begin position="142"/>
        <end position="144"/>
    </location>
</feature>
<feature type="strand" evidence="6">
    <location>
        <begin position="148"/>
        <end position="151"/>
    </location>
</feature>
<feature type="helix" evidence="6">
    <location>
        <begin position="154"/>
        <end position="156"/>
    </location>
</feature>
<feature type="helix" evidence="6">
    <location>
        <begin position="161"/>
        <end position="163"/>
    </location>
</feature>
<feature type="helix" evidence="6">
    <location>
        <begin position="168"/>
        <end position="178"/>
    </location>
</feature>
<feature type="strand" evidence="6">
    <location>
        <begin position="182"/>
        <end position="189"/>
    </location>
</feature>
<feature type="turn" evidence="6">
    <location>
        <begin position="191"/>
        <end position="193"/>
    </location>
</feature>
<feature type="strand" evidence="6">
    <location>
        <begin position="196"/>
        <end position="198"/>
    </location>
</feature>
<feature type="turn" evidence="6">
    <location>
        <begin position="202"/>
        <end position="204"/>
    </location>
</feature>
<feature type="strand" evidence="6">
    <location>
        <begin position="205"/>
        <end position="209"/>
    </location>
</feature>
<feature type="helix" evidence="6">
    <location>
        <begin position="218"/>
        <end position="228"/>
    </location>
</feature>
<feature type="turn" evidence="6">
    <location>
        <begin position="229"/>
        <end position="231"/>
    </location>
</feature>
<feature type="strand" evidence="6">
    <location>
        <begin position="240"/>
        <end position="244"/>
    </location>
</feature>
<feature type="strand" evidence="6">
    <location>
        <begin position="250"/>
        <end position="254"/>
    </location>
</feature>
<feature type="turn" evidence="6">
    <location>
        <begin position="255"/>
        <end position="257"/>
    </location>
</feature>
<feature type="strand" evidence="6">
    <location>
        <begin position="258"/>
        <end position="263"/>
    </location>
</feature>
<feature type="strand" evidence="6">
    <location>
        <begin position="272"/>
        <end position="279"/>
    </location>
</feature>
<feature type="strand" evidence="6">
    <location>
        <begin position="287"/>
        <end position="289"/>
    </location>
</feature>